<feature type="chain" id="PRO_1000077783" description="UvrABC system protein C">
    <location>
        <begin position="1"/>
        <end position="610"/>
    </location>
</feature>
<feature type="domain" description="GIY-YIG" evidence="1">
    <location>
        <begin position="16"/>
        <end position="94"/>
    </location>
</feature>
<feature type="domain" description="UVR" evidence="1">
    <location>
        <begin position="204"/>
        <end position="239"/>
    </location>
</feature>
<protein>
    <recommendedName>
        <fullName evidence="1">UvrABC system protein C</fullName>
        <shortName evidence="1">Protein UvrC</shortName>
    </recommendedName>
    <alternativeName>
        <fullName evidence="1">Excinuclease ABC subunit C</fullName>
    </alternativeName>
</protein>
<dbReference type="EMBL" id="CP000946">
    <property type="protein sequence ID" value="ACA77376.1"/>
    <property type="molecule type" value="Genomic_DNA"/>
</dbReference>
<dbReference type="RefSeq" id="WP_001283424.1">
    <property type="nucleotide sequence ID" value="NZ_MTFT01000011.1"/>
</dbReference>
<dbReference type="SMR" id="B1IZZ1"/>
<dbReference type="KEGG" id="ecl:EcolC_1726"/>
<dbReference type="HOGENOM" id="CLU_014841_3_0_6"/>
<dbReference type="GO" id="GO:0005737">
    <property type="term" value="C:cytoplasm"/>
    <property type="evidence" value="ECO:0007669"/>
    <property type="project" value="UniProtKB-SubCell"/>
</dbReference>
<dbReference type="GO" id="GO:0009380">
    <property type="term" value="C:excinuclease repair complex"/>
    <property type="evidence" value="ECO:0007669"/>
    <property type="project" value="InterPro"/>
</dbReference>
<dbReference type="GO" id="GO:0003677">
    <property type="term" value="F:DNA binding"/>
    <property type="evidence" value="ECO:0007669"/>
    <property type="project" value="UniProtKB-UniRule"/>
</dbReference>
<dbReference type="GO" id="GO:0009381">
    <property type="term" value="F:excinuclease ABC activity"/>
    <property type="evidence" value="ECO:0007669"/>
    <property type="project" value="UniProtKB-UniRule"/>
</dbReference>
<dbReference type="GO" id="GO:0006289">
    <property type="term" value="P:nucleotide-excision repair"/>
    <property type="evidence" value="ECO:0007669"/>
    <property type="project" value="UniProtKB-UniRule"/>
</dbReference>
<dbReference type="GO" id="GO:0009432">
    <property type="term" value="P:SOS response"/>
    <property type="evidence" value="ECO:0007669"/>
    <property type="project" value="UniProtKB-UniRule"/>
</dbReference>
<dbReference type="CDD" id="cd10434">
    <property type="entry name" value="GIY-YIG_UvrC_Cho"/>
    <property type="match status" value="1"/>
</dbReference>
<dbReference type="FunFam" id="1.10.150.20:FF:000005">
    <property type="entry name" value="UvrABC system protein C"/>
    <property type="match status" value="1"/>
</dbReference>
<dbReference type="FunFam" id="3.30.420.340:FF:000001">
    <property type="entry name" value="UvrABC system protein C"/>
    <property type="match status" value="1"/>
</dbReference>
<dbReference type="FunFam" id="3.40.1440.10:FF:000001">
    <property type="entry name" value="UvrABC system protein C"/>
    <property type="match status" value="1"/>
</dbReference>
<dbReference type="FunFam" id="4.10.860.10:FF:000002">
    <property type="entry name" value="UvrABC system protein C"/>
    <property type="match status" value="1"/>
</dbReference>
<dbReference type="Gene3D" id="1.10.150.20">
    <property type="entry name" value="5' to 3' exonuclease, C-terminal subdomain"/>
    <property type="match status" value="1"/>
</dbReference>
<dbReference type="Gene3D" id="3.40.1440.10">
    <property type="entry name" value="GIY-YIG endonuclease"/>
    <property type="match status" value="1"/>
</dbReference>
<dbReference type="Gene3D" id="4.10.860.10">
    <property type="entry name" value="UVR domain"/>
    <property type="match status" value="1"/>
</dbReference>
<dbReference type="Gene3D" id="3.30.420.340">
    <property type="entry name" value="UvrC, RNAse H endonuclease domain"/>
    <property type="match status" value="1"/>
</dbReference>
<dbReference type="HAMAP" id="MF_00203">
    <property type="entry name" value="UvrC"/>
    <property type="match status" value="1"/>
</dbReference>
<dbReference type="InterPro" id="IPR000305">
    <property type="entry name" value="GIY-YIG_endonuc"/>
</dbReference>
<dbReference type="InterPro" id="IPR035901">
    <property type="entry name" value="GIY-YIG_endonuc_sf"/>
</dbReference>
<dbReference type="InterPro" id="IPR047296">
    <property type="entry name" value="GIY-YIG_UvrC_Cho"/>
</dbReference>
<dbReference type="InterPro" id="IPR003583">
    <property type="entry name" value="Hlx-hairpin-Hlx_DNA-bd_motif"/>
</dbReference>
<dbReference type="InterPro" id="IPR010994">
    <property type="entry name" value="RuvA_2-like"/>
</dbReference>
<dbReference type="InterPro" id="IPR001943">
    <property type="entry name" value="UVR_dom"/>
</dbReference>
<dbReference type="InterPro" id="IPR036876">
    <property type="entry name" value="UVR_dom_sf"/>
</dbReference>
<dbReference type="InterPro" id="IPR050066">
    <property type="entry name" value="UvrABC_protein_C"/>
</dbReference>
<dbReference type="InterPro" id="IPR004791">
    <property type="entry name" value="UvrC"/>
</dbReference>
<dbReference type="InterPro" id="IPR001162">
    <property type="entry name" value="UvrC_RNase_H_dom"/>
</dbReference>
<dbReference type="InterPro" id="IPR038476">
    <property type="entry name" value="UvrC_RNase_H_dom_sf"/>
</dbReference>
<dbReference type="NCBIfam" id="NF001824">
    <property type="entry name" value="PRK00558.1-5"/>
    <property type="match status" value="1"/>
</dbReference>
<dbReference type="NCBIfam" id="TIGR00194">
    <property type="entry name" value="uvrC"/>
    <property type="match status" value="1"/>
</dbReference>
<dbReference type="PANTHER" id="PTHR30562:SF1">
    <property type="entry name" value="UVRABC SYSTEM PROTEIN C"/>
    <property type="match status" value="1"/>
</dbReference>
<dbReference type="PANTHER" id="PTHR30562">
    <property type="entry name" value="UVRC/OXIDOREDUCTASE"/>
    <property type="match status" value="1"/>
</dbReference>
<dbReference type="Pfam" id="PF01541">
    <property type="entry name" value="GIY-YIG"/>
    <property type="match status" value="1"/>
</dbReference>
<dbReference type="Pfam" id="PF14520">
    <property type="entry name" value="HHH_5"/>
    <property type="match status" value="1"/>
</dbReference>
<dbReference type="Pfam" id="PF02151">
    <property type="entry name" value="UVR"/>
    <property type="match status" value="1"/>
</dbReference>
<dbReference type="Pfam" id="PF22920">
    <property type="entry name" value="UvrC_RNaseH"/>
    <property type="match status" value="1"/>
</dbReference>
<dbReference type="Pfam" id="PF08459">
    <property type="entry name" value="UvrC_RNaseH_dom"/>
    <property type="match status" value="1"/>
</dbReference>
<dbReference type="SMART" id="SM00465">
    <property type="entry name" value="GIYc"/>
    <property type="match status" value="1"/>
</dbReference>
<dbReference type="SMART" id="SM00278">
    <property type="entry name" value="HhH1"/>
    <property type="match status" value="2"/>
</dbReference>
<dbReference type="SUPFAM" id="SSF46600">
    <property type="entry name" value="C-terminal UvrC-binding domain of UvrB"/>
    <property type="match status" value="1"/>
</dbReference>
<dbReference type="SUPFAM" id="SSF82771">
    <property type="entry name" value="GIY-YIG endonuclease"/>
    <property type="match status" value="1"/>
</dbReference>
<dbReference type="SUPFAM" id="SSF47781">
    <property type="entry name" value="RuvA domain 2-like"/>
    <property type="match status" value="1"/>
</dbReference>
<dbReference type="PROSITE" id="PS50164">
    <property type="entry name" value="GIY_YIG"/>
    <property type="match status" value="1"/>
</dbReference>
<dbReference type="PROSITE" id="PS50151">
    <property type="entry name" value="UVR"/>
    <property type="match status" value="1"/>
</dbReference>
<dbReference type="PROSITE" id="PS50165">
    <property type="entry name" value="UVRC"/>
    <property type="match status" value="1"/>
</dbReference>
<comment type="function">
    <text evidence="1">The UvrABC repair system catalyzes the recognition and processing of DNA lesions. UvrC both incises the 5' and 3' sides of the lesion. The N-terminal half is responsible for the 3' incision and the C-terminal half is responsible for the 5' incision.</text>
</comment>
<comment type="subunit">
    <text evidence="1">Interacts with UvrB in an incision complex.</text>
</comment>
<comment type="subcellular location">
    <subcellularLocation>
        <location evidence="1">Cytoplasm</location>
    </subcellularLocation>
</comment>
<comment type="similarity">
    <text evidence="1">Belongs to the UvrC family.</text>
</comment>
<name>UVRC_ECOLC</name>
<gene>
    <name evidence="1" type="primary">uvrC</name>
    <name type="ordered locus">EcolC_1726</name>
</gene>
<sequence>MSDQFDAKAFLKTVTSQPGVYRMYDAGGTVIYVGKAKDLKKRLSSYFRSNLASRKTEALVAQIQQIDVTVTHTETEALLLEHNYIKLYQPRYNVLLRDDKSYPFIFLSGDTHPRLAMHRGAKHAKGEYFGPFPNGYAVRETLALLQKIFPIRQCENSVYRNRSRPCLQYQIGRCLGPCVEGLVSEEEYAQQVEYVRLFLSGKDDQVLTQLISRMETASQNLEFEEAARIRDQIQAVRRVTEKQFVSNTGDDLDVIGVAFDAGMACVHVLFIRQGKVLGSRSYFPKVPGGTELSEVVETFVGQFYLQGSQMRTLPGEILLDFNLSDKTLLADSLSELAGRKINVQTKPRGDRARYLKLARTNAATALTSKLSQQSTVHQRLTALASVLKLPEVKRMECFDISHTMGEQTVASCVVFDANGPLRAEYRRYNITGITPGDDYAAMNQVLRRRYGKAIDDSKIPDVILIDGGKGQLAQAKNVFAELDVSWDKNHPLLLGVAKGVDRKAGLETLFFEPEGEGFSLPPDSPALHVIQHIRDESHDHAIGGHRKKRAKVKNTSSLETIEGVGPKRRQMLLKYMGGLQGLRNASVEEIAKVPGISQGLAEKIFWSLKH</sequence>
<keyword id="KW-0963">Cytoplasm</keyword>
<keyword id="KW-0227">DNA damage</keyword>
<keyword id="KW-0228">DNA excision</keyword>
<keyword id="KW-0234">DNA repair</keyword>
<keyword id="KW-0267">Excision nuclease</keyword>
<keyword id="KW-0742">SOS response</keyword>
<accession>B1IZZ1</accession>
<organism>
    <name type="scientific">Escherichia coli (strain ATCC 8739 / DSM 1576 / NBRC 3972 / NCIMB 8545 / WDCM 00012 / Crooks)</name>
    <dbReference type="NCBI Taxonomy" id="481805"/>
    <lineage>
        <taxon>Bacteria</taxon>
        <taxon>Pseudomonadati</taxon>
        <taxon>Pseudomonadota</taxon>
        <taxon>Gammaproteobacteria</taxon>
        <taxon>Enterobacterales</taxon>
        <taxon>Enterobacteriaceae</taxon>
        <taxon>Escherichia</taxon>
    </lineage>
</organism>
<reference key="1">
    <citation type="submission" date="2008-02" db="EMBL/GenBank/DDBJ databases">
        <title>Complete sequence of Escherichia coli C str. ATCC 8739.</title>
        <authorList>
            <person name="Copeland A."/>
            <person name="Lucas S."/>
            <person name="Lapidus A."/>
            <person name="Glavina del Rio T."/>
            <person name="Dalin E."/>
            <person name="Tice H."/>
            <person name="Bruce D."/>
            <person name="Goodwin L."/>
            <person name="Pitluck S."/>
            <person name="Kiss H."/>
            <person name="Brettin T."/>
            <person name="Detter J.C."/>
            <person name="Han C."/>
            <person name="Kuske C.R."/>
            <person name="Schmutz J."/>
            <person name="Larimer F."/>
            <person name="Land M."/>
            <person name="Hauser L."/>
            <person name="Kyrpides N."/>
            <person name="Mikhailova N."/>
            <person name="Ingram L."/>
            <person name="Richardson P."/>
        </authorList>
    </citation>
    <scope>NUCLEOTIDE SEQUENCE [LARGE SCALE GENOMIC DNA]</scope>
    <source>
        <strain>ATCC 8739 / DSM 1576 / NBRC 3972 / NCIMB 8545 / WDCM 00012 / Crooks</strain>
    </source>
</reference>
<evidence type="ECO:0000255" key="1">
    <source>
        <dbReference type="HAMAP-Rule" id="MF_00203"/>
    </source>
</evidence>
<proteinExistence type="inferred from homology"/>